<proteinExistence type="inferred from homology"/>
<comment type="function">
    <text evidence="1">Required for maturation of 30S ribosomal subunits.</text>
</comment>
<comment type="subcellular location">
    <subcellularLocation>
        <location evidence="1">Cytoplasm</location>
    </subcellularLocation>
</comment>
<comment type="similarity">
    <text evidence="1">Belongs to the RimP family.</text>
</comment>
<keyword id="KW-0963">Cytoplasm</keyword>
<keyword id="KW-0690">Ribosome biogenesis</keyword>
<gene>
    <name evidence="1" type="primary">rimP</name>
    <name type="ordered locus">PPA1495</name>
</gene>
<feature type="chain" id="PRO_0000229263" description="Ribosome maturation factor RimP">
    <location>
        <begin position="1"/>
        <end position="178"/>
    </location>
</feature>
<name>RIMP_CUTAK</name>
<accession>Q6A7M3</accession>
<organism>
    <name type="scientific">Cutibacterium acnes (strain DSM 16379 / KPA171202)</name>
    <name type="common">Propionibacterium acnes</name>
    <dbReference type="NCBI Taxonomy" id="267747"/>
    <lineage>
        <taxon>Bacteria</taxon>
        <taxon>Bacillati</taxon>
        <taxon>Actinomycetota</taxon>
        <taxon>Actinomycetes</taxon>
        <taxon>Propionibacteriales</taxon>
        <taxon>Propionibacteriaceae</taxon>
        <taxon>Cutibacterium</taxon>
    </lineage>
</organism>
<dbReference type="EMBL" id="AE017283">
    <property type="protein sequence ID" value="AAT83242.1"/>
    <property type="molecule type" value="Genomic_DNA"/>
</dbReference>
<dbReference type="RefSeq" id="WP_002517033.1">
    <property type="nucleotide sequence ID" value="NZ_CP025935.1"/>
</dbReference>
<dbReference type="SMR" id="Q6A7M3"/>
<dbReference type="EnsemblBacteria" id="AAT83242">
    <property type="protein sequence ID" value="AAT83242"/>
    <property type="gene ID" value="PPA1495"/>
</dbReference>
<dbReference type="GeneID" id="92857479"/>
<dbReference type="KEGG" id="pac:PPA1495"/>
<dbReference type="eggNOG" id="COG0779">
    <property type="taxonomic scope" value="Bacteria"/>
</dbReference>
<dbReference type="HOGENOM" id="CLU_070525_3_0_11"/>
<dbReference type="Proteomes" id="UP000000603">
    <property type="component" value="Chromosome"/>
</dbReference>
<dbReference type="GO" id="GO:0005829">
    <property type="term" value="C:cytosol"/>
    <property type="evidence" value="ECO:0007669"/>
    <property type="project" value="TreeGrafter"/>
</dbReference>
<dbReference type="GO" id="GO:0000028">
    <property type="term" value="P:ribosomal small subunit assembly"/>
    <property type="evidence" value="ECO:0007669"/>
    <property type="project" value="TreeGrafter"/>
</dbReference>
<dbReference type="GO" id="GO:0006412">
    <property type="term" value="P:translation"/>
    <property type="evidence" value="ECO:0007669"/>
    <property type="project" value="TreeGrafter"/>
</dbReference>
<dbReference type="CDD" id="cd01734">
    <property type="entry name" value="YlxS_C"/>
    <property type="match status" value="1"/>
</dbReference>
<dbReference type="Gene3D" id="3.30.300.70">
    <property type="entry name" value="RimP-like superfamily, N-terminal"/>
    <property type="match status" value="1"/>
</dbReference>
<dbReference type="HAMAP" id="MF_01077">
    <property type="entry name" value="RimP"/>
    <property type="match status" value="1"/>
</dbReference>
<dbReference type="InterPro" id="IPR003728">
    <property type="entry name" value="Ribosome_maturation_RimP"/>
</dbReference>
<dbReference type="InterPro" id="IPR028998">
    <property type="entry name" value="RimP_C"/>
</dbReference>
<dbReference type="InterPro" id="IPR028989">
    <property type="entry name" value="RimP_N"/>
</dbReference>
<dbReference type="InterPro" id="IPR035956">
    <property type="entry name" value="RimP_N_sf"/>
</dbReference>
<dbReference type="NCBIfam" id="NF000930">
    <property type="entry name" value="PRK00092.2-2"/>
    <property type="match status" value="1"/>
</dbReference>
<dbReference type="PANTHER" id="PTHR33867">
    <property type="entry name" value="RIBOSOME MATURATION FACTOR RIMP"/>
    <property type="match status" value="1"/>
</dbReference>
<dbReference type="PANTHER" id="PTHR33867:SF1">
    <property type="entry name" value="RIBOSOME MATURATION FACTOR RIMP"/>
    <property type="match status" value="1"/>
</dbReference>
<dbReference type="Pfam" id="PF17384">
    <property type="entry name" value="DUF150_C"/>
    <property type="match status" value="1"/>
</dbReference>
<dbReference type="Pfam" id="PF02576">
    <property type="entry name" value="RimP_N"/>
    <property type="match status" value="1"/>
</dbReference>
<dbReference type="SUPFAM" id="SSF75420">
    <property type="entry name" value="YhbC-like, N-terminal domain"/>
    <property type="match status" value="1"/>
</dbReference>
<evidence type="ECO:0000255" key="1">
    <source>
        <dbReference type="HAMAP-Rule" id="MF_01077"/>
    </source>
</evidence>
<protein>
    <recommendedName>
        <fullName evidence="1">Ribosome maturation factor RimP</fullName>
    </recommendedName>
</protein>
<reference key="1">
    <citation type="journal article" date="2004" name="Science">
        <title>The complete genome sequence of Propionibacterium acnes, a commensal of human skin.</title>
        <authorList>
            <person name="Brueggemann H."/>
            <person name="Henne A."/>
            <person name="Hoster F."/>
            <person name="Liesegang H."/>
            <person name="Wiezer A."/>
            <person name="Strittmatter A."/>
            <person name="Hujer S."/>
            <person name="Duerre P."/>
            <person name="Gottschalk G."/>
        </authorList>
    </citation>
    <scope>NUCLEOTIDE SEQUENCE [LARGE SCALE GENOMIC DNA]</scope>
    <source>
        <strain>DSM 16379 / KPA171202</strain>
    </source>
</reference>
<sequence length="178" mass="19535">MNAERLTRLLEPVVSQVGLELDRVDVVPAGRRRLVRVTIDGDGPDGHGPSLDEISEATAEISHCLDDSGAMGESPYTLEVSSRGVSTPLTQPRHYRRNIGHLVRFTLNPAEEQKSGETFDGRIAEAGEEVVTLEVEAENSKPHKPVYTTREVQLADVAKAVVQVELNRRDAQASKEEN</sequence>